<evidence type="ECO:0000255" key="1">
    <source>
        <dbReference type="HAMAP-Rule" id="MF_00384"/>
    </source>
</evidence>
<name>KHSE_VIBCM</name>
<gene>
    <name evidence="1" type="primary">thrB</name>
    <name type="ordered locus">VCM66_2286</name>
</gene>
<accession>C3LQD5</accession>
<proteinExistence type="inferred from homology"/>
<protein>
    <recommendedName>
        <fullName evidence="1">Homoserine kinase</fullName>
        <shortName evidence="1">HK</shortName>
        <shortName evidence="1">HSK</shortName>
        <ecNumber evidence="1">2.7.1.39</ecNumber>
    </recommendedName>
</protein>
<reference key="1">
    <citation type="journal article" date="2008" name="PLoS ONE">
        <title>A recalibrated molecular clock and independent origins for the cholera pandemic clones.</title>
        <authorList>
            <person name="Feng L."/>
            <person name="Reeves P.R."/>
            <person name="Lan R."/>
            <person name="Ren Y."/>
            <person name="Gao C."/>
            <person name="Zhou Z."/>
            <person name="Ren Y."/>
            <person name="Cheng J."/>
            <person name="Wang W."/>
            <person name="Wang J."/>
            <person name="Qian W."/>
            <person name="Li D."/>
            <person name="Wang L."/>
        </authorList>
    </citation>
    <scope>NUCLEOTIDE SEQUENCE [LARGE SCALE GENOMIC DNA]</scope>
    <source>
        <strain>M66-2</strain>
    </source>
</reference>
<feature type="chain" id="PRO_1000134269" description="Homoserine kinase">
    <location>
        <begin position="1"/>
        <end position="318"/>
    </location>
</feature>
<feature type="binding site" evidence="1">
    <location>
        <begin position="97"/>
        <end position="107"/>
    </location>
    <ligand>
        <name>ATP</name>
        <dbReference type="ChEBI" id="CHEBI:30616"/>
    </ligand>
</feature>
<keyword id="KW-0028">Amino-acid biosynthesis</keyword>
<keyword id="KW-0067">ATP-binding</keyword>
<keyword id="KW-0963">Cytoplasm</keyword>
<keyword id="KW-0418">Kinase</keyword>
<keyword id="KW-0547">Nucleotide-binding</keyword>
<keyword id="KW-0791">Threonine biosynthesis</keyword>
<keyword id="KW-0808">Transferase</keyword>
<organism>
    <name type="scientific">Vibrio cholerae serotype O1 (strain M66-2)</name>
    <dbReference type="NCBI Taxonomy" id="579112"/>
    <lineage>
        <taxon>Bacteria</taxon>
        <taxon>Pseudomonadati</taxon>
        <taxon>Pseudomonadota</taxon>
        <taxon>Gammaproteobacteria</taxon>
        <taxon>Vibrionales</taxon>
        <taxon>Vibrionaceae</taxon>
        <taxon>Vibrio</taxon>
    </lineage>
</organism>
<sequence>MSVVVYAPASIGNVSVGFDVLGAAVSPIDGTLLGDRVKVEAGAEAFTLKTAGRFVDKLPANPQENIVYDCWQVFARELEKKSVVLKPLTMTLEKNMPIGSGLGSSACSIVAALDALNQFHASPLDETELLALMGEMEGKISGSIHYDNVAPCYLGGVQLMLEELGIISQSVPSFDDWYWVMAYPGIKVSTAEARAILPAQYRRQDIVAHGRYLAGFIHACHTQQPELAAKMIKDVIAEPYREKLLPGFAKARNYAASAGALATGISGSGPTLFSVCKEQAVAERVARWLEQNYVQNEEGFVHICRLDKQGSKVTGSEL</sequence>
<comment type="function">
    <text evidence="1">Catalyzes the ATP-dependent phosphorylation of L-homoserine to L-homoserine phosphate.</text>
</comment>
<comment type="catalytic activity">
    <reaction evidence="1">
        <text>L-homoserine + ATP = O-phospho-L-homoserine + ADP + H(+)</text>
        <dbReference type="Rhea" id="RHEA:13985"/>
        <dbReference type="ChEBI" id="CHEBI:15378"/>
        <dbReference type="ChEBI" id="CHEBI:30616"/>
        <dbReference type="ChEBI" id="CHEBI:57476"/>
        <dbReference type="ChEBI" id="CHEBI:57590"/>
        <dbReference type="ChEBI" id="CHEBI:456216"/>
        <dbReference type="EC" id="2.7.1.39"/>
    </reaction>
</comment>
<comment type="pathway">
    <text evidence="1">Amino-acid biosynthesis; L-threonine biosynthesis; L-threonine from L-aspartate: step 4/5.</text>
</comment>
<comment type="subcellular location">
    <subcellularLocation>
        <location evidence="1">Cytoplasm</location>
    </subcellularLocation>
</comment>
<comment type="similarity">
    <text evidence="1">Belongs to the GHMP kinase family. Homoserine kinase subfamily.</text>
</comment>
<dbReference type="EC" id="2.7.1.39" evidence="1"/>
<dbReference type="EMBL" id="CP001233">
    <property type="protein sequence ID" value="ACP06587.1"/>
    <property type="molecule type" value="Genomic_DNA"/>
</dbReference>
<dbReference type="RefSeq" id="WP_000118015.1">
    <property type="nucleotide sequence ID" value="NC_012578.1"/>
</dbReference>
<dbReference type="SMR" id="C3LQD5"/>
<dbReference type="KEGG" id="vcm:VCM66_2286"/>
<dbReference type="HOGENOM" id="CLU_041243_1_1_6"/>
<dbReference type="UniPathway" id="UPA00050">
    <property type="reaction ID" value="UER00064"/>
</dbReference>
<dbReference type="Proteomes" id="UP000001217">
    <property type="component" value="Chromosome I"/>
</dbReference>
<dbReference type="GO" id="GO:0005737">
    <property type="term" value="C:cytoplasm"/>
    <property type="evidence" value="ECO:0007669"/>
    <property type="project" value="UniProtKB-SubCell"/>
</dbReference>
<dbReference type="GO" id="GO:0005524">
    <property type="term" value="F:ATP binding"/>
    <property type="evidence" value="ECO:0007669"/>
    <property type="project" value="UniProtKB-UniRule"/>
</dbReference>
<dbReference type="GO" id="GO:0004413">
    <property type="term" value="F:homoserine kinase activity"/>
    <property type="evidence" value="ECO:0007669"/>
    <property type="project" value="UniProtKB-UniRule"/>
</dbReference>
<dbReference type="GO" id="GO:0009088">
    <property type="term" value="P:threonine biosynthetic process"/>
    <property type="evidence" value="ECO:0007669"/>
    <property type="project" value="UniProtKB-UniRule"/>
</dbReference>
<dbReference type="Gene3D" id="3.30.230.10">
    <property type="match status" value="1"/>
</dbReference>
<dbReference type="Gene3D" id="3.30.70.890">
    <property type="entry name" value="GHMP kinase, C-terminal domain"/>
    <property type="match status" value="1"/>
</dbReference>
<dbReference type="HAMAP" id="MF_00384">
    <property type="entry name" value="Homoser_kinase"/>
    <property type="match status" value="1"/>
</dbReference>
<dbReference type="InterPro" id="IPR013750">
    <property type="entry name" value="GHMP_kinase_C_dom"/>
</dbReference>
<dbReference type="InterPro" id="IPR036554">
    <property type="entry name" value="GHMP_kinase_C_sf"/>
</dbReference>
<dbReference type="InterPro" id="IPR006204">
    <property type="entry name" value="GHMP_kinase_N_dom"/>
</dbReference>
<dbReference type="InterPro" id="IPR006203">
    <property type="entry name" value="GHMP_knse_ATP-bd_CS"/>
</dbReference>
<dbReference type="InterPro" id="IPR000870">
    <property type="entry name" value="Homoserine_kinase"/>
</dbReference>
<dbReference type="InterPro" id="IPR020568">
    <property type="entry name" value="Ribosomal_Su5_D2-typ_SF"/>
</dbReference>
<dbReference type="InterPro" id="IPR014721">
    <property type="entry name" value="Ribsml_uS5_D2-typ_fold_subgr"/>
</dbReference>
<dbReference type="NCBIfam" id="NF002288">
    <property type="entry name" value="PRK01212.1-4"/>
    <property type="match status" value="1"/>
</dbReference>
<dbReference type="NCBIfam" id="TIGR00191">
    <property type="entry name" value="thrB"/>
    <property type="match status" value="1"/>
</dbReference>
<dbReference type="PANTHER" id="PTHR20861:SF1">
    <property type="entry name" value="HOMOSERINE KINASE"/>
    <property type="match status" value="1"/>
</dbReference>
<dbReference type="PANTHER" id="PTHR20861">
    <property type="entry name" value="HOMOSERINE/4-DIPHOSPHOCYTIDYL-2-C-METHYL-D-ERYTHRITOL KINASE"/>
    <property type="match status" value="1"/>
</dbReference>
<dbReference type="Pfam" id="PF08544">
    <property type="entry name" value="GHMP_kinases_C"/>
    <property type="match status" value="1"/>
</dbReference>
<dbReference type="Pfam" id="PF00288">
    <property type="entry name" value="GHMP_kinases_N"/>
    <property type="match status" value="1"/>
</dbReference>
<dbReference type="PIRSF" id="PIRSF000676">
    <property type="entry name" value="Homoser_kin"/>
    <property type="match status" value="1"/>
</dbReference>
<dbReference type="PRINTS" id="PR00958">
    <property type="entry name" value="HOMSERKINASE"/>
</dbReference>
<dbReference type="SUPFAM" id="SSF55060">
    <property type="entry name" value="GHMP Kinase, C-terminal domain"/>
    <property type="match status" value="1"/>
</dbReference>
<dbReference type="SUPFAM" id="SSF54211">
    <property type="entry name" value="Ribosomal protein S5 domain 2-like"/>
    <property type="match status" value="1"/>
</dbReference>
<dbReference type="PROSITE" id="PS00627">
    <property type="entry name" value="GHMP_KINASES_ATP"/>
    <property type="match status" value="1"/>
</dbReference>